<protein>
    <recommendedName>
        <fullName evidence="1">Large ribosomal subunit protein uL15</fullName>
    </recommendedName>
    <alternativeName>
        <fullName evidence="3">50S ribosomal protein L15</fullName>
    </alternativeName>
</protein>
<gene>
    <name evidence="1" type="primary">rplO</name>
    <name type="ordered locus">FTF0344</name>
</gene>
<organism>
    <name type="scientific">Francisella tularensis subsp. tularensis (strain FSC 198)</name>
    <dbReference type="NCBI Taxonomy" id="393115"/>
    <lineage>
        <taxon>Bacteria</taxon>
        <taxon>Pseudomonadati</taxon>
        <taxon>Pseudomonadota</taxon>
        <taxon>Gammaproteobacteria</taxon>
        <taxon>Thiotrichales</taxon>
        <taxon>Francisellaceae</taxon>
        <taxon>Francisella</taxon>
    </lineage>
</organism>
<name>RL15_FRAT1</name>
<comment type="function">
    <text evidence="1">Binds to the 23S rRNA.</text>
</comment>
<comment type="subunit">
    <text evidence="1">Part of the 50S ribosomal subunit.</text>
</comment>
<comment type="similarity">
    <text evidence="1">Belongs to the universal ribosomal protein uL15 family.</text>
</comment>
<evidence type="ECO:0000255" key="1">
    <source>
        <dbReference type="HAMAP-Rule" id="MF_01341"/>
    </source>
</evidence>
<evidence type="ECO:0000256" key="2">
    <source>
        <dbReference type="SAM" id="MobiDB-lite"/>
    </source>
</evidence>
<evidence type="ECO:0000305" key="3"/>
<dbReference type="EMBL" id="AM286280">
    <property type="protein sequence ID" value="CAL08360.1"/>
    <property type="molecule type" value="Genomic_DNA"/>
</dbReference>
<dbReference type="RefSeq" id="WP_003021585.1">
    <property type="nucleotide sequence ID" value="NC_008245.1"/>
</dbReference>
<dbReference type="SMR" id="Q14JA1"/>
<dbReference type="KEGG" id="ftf:FTF0344"/>
<dbReference type="HOGENOM" id="CLU_055188_4_2_6"/>
<dbReference type="GO" id="GO:0022625">
    <property type="term" value="C:cytosolic large ribosomal subunit"/>
    <property type="evidence" value="ECO:0007669"/>
    <property type="project" value="TreeGrafter"/>
</dbReference>
<dbReference type="GO" id="GO:0019843">
    <property type="term" value="F:rRNA binding"/>
    <property type="evidence" value="ECO:0007669"/>
    <property type="project" value="UniProtKB-UniRule"/>
</dbReference>
<dbReference type="GO" id="GO:0003735">
    <property type="term" value="F:structural constituent of ribosome"/>
    <property type="evidence" value="ECO:0007669"/>
    <property type="project" value="InterPro"/>
</dbReference>
<dbReference type="GO" id="GO:0006412">
    <property type="term" value="P:translation"/>
    <property type="evidence" value="ECO:0007669"/>
    <property type="project" value="UniProtKB-UniRule"/>
</dbReference>
<dbReference type="Gene3D" id="3.100.10.10">
    <property type="match status" value="1"/>
</dbReference>
<dbReference type="HAMAP" id="MF_01341">
    <property type="entry name" value="Ribosomal_uL15"/>
    <property type="match status" value="1"/>
</dbReference>
<dbReference type="InterPro" id="IPR030878">
    <property type="entry name" value="Ribosomal_uL15"/>
</dbReference>
<dbReference type="InterPro" id="IPR021131">
    <property type="entry name" value="Ribosomal_uL15/eL18"/>
</dbReference>
<dbReference type="InterPro" id="IPR036227">
    <property type="entry name" value="Ribosomal_uL15/eL18_sf"/>
</dbReference>
<dbReference type="InterPro" id="IPR005749">
    <property type="entry name" value="Ribosomal_uL15_bac-type"/>
</dbReference>
<dbReference type="InterPro" id="IPR001196">
    <property type="entry name" value="Ribosomal_uL15_CS"/>
</dbReference>
<dbReference type="NCBIfam" id="TIGR01071">
    <property type="entry name" value="rplO_bact"/>
    <property type="match status" value="1"/>
</dbReference>
<dbReference type="PANTHER" id="PTHR12934">
    <property type="entry name" value="50S RIBOSOMAL PROTEIN L15"/>
    <property type="match status" value="1"/>
</dbReference>
<dbReference type="PANTHER" id="PTHR12934:SF11">
    <property type="entry name" value="LARGE RIBOSOMAL SUBUNIT PROTEIN UL15M"/>
    <property type="match status" value="1"/>
</dbReference>
<dbReference type="Pfam" id="PF00828">
    <property type="entry name" value="Ribosomal_L27A"/>
    <property type="match status" value="1"/>
</dbReference>
<dbReference type="SUPFAM" id="SSF52080">
    <property type="entry name" value="Ribosomal proteins L15p and L18e"/>
    <property type="match status" value="1"/>
</dbReference>
<dbReference type="PROSITE" id="PS00475">
    <property type="entry name" value="RIBOSOMAL_L15"/>
    <property type="match status" value="1"/>
</dbReference>
<sequence length="143" mass="15000">MKLNTLAPAAGSKSAPKRLGRGIGSGLGKTSGKGHKGQKARSGGYHKVGFEGGQMPLQRRLPKFGFTSASKGYVAEIRLHELNNVVADEVTLDTLKDFGLIRKDIKTVKVIASGEIQKAVSLKGIACTKGAKEAIEKAGGKVE</sequence>
<reference key="1">
    <citation type="journal article" date="2007" name="PLoS ONE">
        <title>Genome sequencing shows that European isolates of Francisella tularensis subspecies tularensis are almost identical to US laboratory strain Schu S4.</title>
        <authorList>
            <person name="Chaudhuri R.R."/>
            <person name="Ren C.-P."/>
            <person name="Desmond L."/>
            <person name="Vincent G.A."/>
            <person name="Silman N.J."/>
            <person name="Brehm J.K."/>
            <person name="Elmore M.J."/>
            <person name="Hudson M.J."/>
            <person name="Forsman M."/>
            <person name="Isherwood K.E."/>
            <person name="Gurycova D."/>
            <person name="Minton N.P."/>
            <person name="Titball R.W."/>
            <person name="Pallen M.J."/>
            <person name="Vipond R."/>
        </authorList>
    </citation>
    <scope>NUCLEOTIDE SEQUENCE [LARGE SCALE GENOMIC DNA]</scope>
    <source>
        <strain>FSC 198</strain>
    </source>
</reference>
<proteinExistence type="inferred from homology"/>
<accession>Q14JA1</accession>
<keyword id="KW-0687">Ribonucleoprotein</keyword>
<keyword id="KW-0689">Ribosomal protein</keyword>
<keyword id="KW-0694">RNA-binding</keyword>
<keyword id="KW-0699">rRNA-binding</keyword>
<feature type="chain" id="PRO_1000054461" description="Large ribosomal subunit protein uL15">
    <location>
        <begin position="1"/>
        <end position="143"/>
    </location>
</feature>
<feature type="region of interest" description="Disordered" evidence="2">
    <location>
        <begin position="1"/>
        <end position="52"/>
    </location>
</feature>
<feature type="compositionally biased region" description="Gly residues" evidence="2">
    <location>
        <begin position="21"/>
        <end position="31"/>
    </location>
</feature>